<dbReference type="EC" id="7.1.1.2" evidence="1"/>
<dbReference type="EMBL" id="U96639">
    <property type="protein sequence ID" value="AAD04774.2"/>
    <property type="molecule type" value="Genomic_DNA"/>
</dbReference>
<dbReference type="EMBL" id="AY729880">
    <property type="protein sequence ID" value="AAU12158.1"/>
    <property type="molecule type" value="Genomic_DNA"/>
</dbReference>
<dbReference type="PIR" id="T11504">
    <property type="entry name" value="T11504"/>
</dbReference>
<dbReference type="RefSeq" id="NP_008482.4">
    <property type="nucleotide sequence ID" value="NC_002008.4"/>
</dbReference>
<dbReference type="SMR" id="Q9ZZ56"/>
<dbReference type="FunCoup" id="Q9ZZ56">
    <property type="interactions" value="18"/>
</dbReference>
<dbReference type="STRING" id="9615.ENSCAFP00000030320"/>
<dbReference type="PaxDb" id="9612-ENSCAFP00000030320"/>
<dbReference type="GeneID" id="804485"/>
<dbReference type="KEGG" id="cfa:804485"/>
<dbReference type="CTD" id="4541"/>
<dbReference type="eggNOG" id="ENOG502S2Q2">
    <property type="taxonomic scope" value="Eukaryota"/>
</dbReference>
<dbReference type="HOGENOM" id="CLU_129718_0_0_1"/>
<dbReference type="InParanoid" id="Q9ZZ56"/>
<dbReference type="OMA" id="WVIYDTG"/>
<dbReference type="TreeFam" id="TF343324"/>
<dbReference type="Proteomes" id="UP000002254">
    <property type="component" value="Mitochondrion"/>
</dbReference>
<dbReference type="Proteomes" id="UP000694429">
    <property type="component" value="Unplaced"/>
</dbReference>
<dbReference type="Proteomes" id="UP000694542">
    <property type="component" value="Unassembled WGS sequence"/>
</dbReference>
<dbReference type="Proteomes" id="UP000805418">
    <property type="component" value="Mitochondrion MT"/>
</dbReference>
<dbReference type="Bgee" id="ENSCAFG00000022740">
    <property type="expression patterns" value="Expressed in cardiac muscle of left ventricle and 45 other cell types or tissues"/>
</dbReference>
<dbReference type="GO" id="GO:0005743">
    <property type="term" value="C:mitochondrial inner membrane"/>
    <property type="evidence" value="ECO:0000250"/>
    <property type="project" value="UniProtKB"/>
</dbReference>
<dbReference type="GO" id="GO:0005739">
    <property type="term" value="C:mitochondrion"/>
    <property type="evidence" value="ECO:0000318"/>
    <property type="project" value="GO_Central"/>
</dbReference>
<dbReference type="GO" id="GO:0008137">
    <property type="term" value="F:NADH dehydrogenase (ubiquinone) activity"/>
    <property type="evidence" value="ECO:0000250"/>
    <property type="project" value="UniProtKB"/>
</dbReference>
<dbReference type="GO" id="GO:0006120">
    <property type="term" value="P:mitochondrial electron transport, NADH to ubiquinone"/>
    <property type="evidence" value="ECO:0000250"/>
    <property type="project" value="UniProtKB"/>
</dbReference>
<dbReference type="GO" id="GO:0032981">
    <property type="term" value="P:mitochondrial respiratory chain complex I assembly"/>
    <property type="evidence" value="ECO:0000250"/>
    <property type="project" value="UniProtKB"/>
</dbReference>
<dbReference type="Gene3D" id="1.20.120.1200">
    <property type="entry name" value="NADH-ubiquinone/plastoquinone oxidoreductase chain 6, subunit NuoJ"/>
    <property type="match status" value="1"/>
</dbReference>
<dbReference type="InterPro" id="IPR050269">
    <property type="entry name" value="ComplexI_Subunit6"/>
</dbReference>
<dbReference type="InterPro" id="IPR001457">
    <property type="entry name" value="NADH_UbQ/plastoQ_OxRdtase_su6"/>
</dbReference>
<dbReference type="InterPro" id="IPR042106">
    <property type="entry name" value="Nuo/plastoQ_OxRdtase_6_NuoJ"/>
</dbReference>
<dbReference type="PANTHER" id="PTHR11435">
    <property type="entry name" value="NADH UBIQUINONE OXIDOREDUCTASE SUBUNIT ND6"/>
    <property type="match status" value="1"/>
</dbReference>
<dbReference type="PANTHER" id="PTHR11435:SF1">
    <property type="entry name" value="NADH-UBIQUINONE OXIDOREDUCTASE CHAIN 6"/>
    <property type="match status" value="1"/>
</dbReference>
<dbReference type="Pfam" id="PF00499">
    <property type="entry name" value="Oxidored_q3"/>
    <property type="match status" value="1"/>
</dbReference>
<evidence type="ECO:0000250" key="1">
    <source>
        <dbReference type="UniProtKB" id="P03923"/>
    </source>
</evidence>
<evidence type="ECO:0000250" key="2">
    <source>
        <dbReference type="UniProtKB" id="P03924"/>
    </source>
</evidence>
<evidence type="ECO:0000255" key="3"/>
<evidence type="ECO:0000305" key="4"/>
<evidence type="ECO:0000312" key="5">
    <source>
        <dbReference type="Proteomes" id="UP000002254"/>
    </source>
</evidence>
<accession>Q9ZZ56</accession>
<sequence>MMTYIVFILSIVFVMSFVGFATKPSPIYGGLVLIISGGIGCAIVLNFGGSFLGLMVFLIYLGGMLVVFGYTTAMATEQYPEVWVSNKAVLAAFITGLLSELLTACYILKDDEVEVVLKFNGMGDWVIYDTGDSGFFSEEAMGIAALYSYGTWLVVVTGWSLLIGVLVIMEVTRGN</sequence>
<protein>
    <recommendedName>
        <fullName>NADH-ubiquinone oxidoreductase chain 6</fullName>
        <ecNumber evidence="1">7.1.1.2</ecNumber>
    </recommendedName>
    <alternativeName>
        <fullName>NADH dehydrogenase subunit 6</fullName>
    </alternativeName>
</protein>
<geneLocation type="mitochondrion"/>
<reference key="1">
    <citation type="journal article" date="1998" name="Mol. Phylogenet. Evol.">
        <title>The complete nucleotide sequence of the domestic dog (Canis familiaris) mitochondrial genome.</title>
        <authorList>
            <person name="Kim K.S."/>
            <person name="Lee S.E."/>
            <person name="Jeong H.W."/>
            <person name="Ha J.H."/>
        </authorList>
    </citation>
    <scope>NUCLEOTIDE SEQUENCE [GENOMIC DNA]</scope>
    <source>
        <strain evidence="5">Boxer</strain>
    </source>
</reference>
<reference key="2">
    <citation type="submission" date="2000-04" db="EMBL/GenBank/DDBJ databases">
        <authorList>
            <person name="Kim K.S."/>
            <person name="Lee S.E."/>
            <person name="Jeong H.W."/>
            <person name="Jeong S.Y."/>
            <person name="Sohn H.S."/>
            <person name="Ha J.H."/>
        </authorList>
    </citation>
    <scope>SEQUENCE REVISION TO 117</scope>
</reference>
<reference key="3">
    <citation type="submission" date="2004-08" db="EMBL/GenBank/DDBJ databases">
        <title>The complete mitochondrial DNA sequence of the Beagle dog (Canis familiaris).</title>
        <authorList>
            <person name="Zhu S."/>
            <person name="Xu Q."/>
            <person name="Chang H."/>
        </authorList>
    </citation>
    <scope>NUCLEOTIDE SEQUENCE [GENOMIC DNA]</scope>
    <source>
        <strain>Beagle</strain>
    </source>
</reference>
<keyword id="KW-0249">Electron transport</keyword>
<keyword id="KW-0472">Membrane</keyword>
<keyword id="KW-0496">Mitochondrion</keyword>
<keyword id="KW-0999">Mitochondrion inner membrane</keyword>
<keyword id="KW-0520">NAD</keyword>
<keyword id="KW-1185">Reference proteome</keyword>
<keyword id="KW-0679">Respiratory chain</keyword>
<keyword id="KW-1278">Translocase</keyword>
<keyword id="KW-0812">Transmembrane</keyword>
<keyword id="KW-1133">Transmembrane helix</keyword>
<keyword id="KW-0813">Transport</keyword>
<keyword id="KW-0830">Ubiquinone</keyword>
<organism>
    <name type="scientific">Canis lupus familiaris</name>
    <name type="common">Dog</name>
    <name type="synonym">Canis familiaris</name>
    <dbReference type="NCBI Taxonomy" id="9615"/>
    <lineage>
        <taxon>Eukaryota</taxon>
        <taxon>Metazoa</taxon>
        <taxon>Chordata</taxon>
        <taxon>Craniata</taxon>
        <taxon>Vertebrata</taxon>
        <taxon>Euteleostomi</taxon>
        <taxon>Mammalia</taxon>
        <taxon>Eutheria</taxon>
        <taxon>Laurasiatheria</taxon>
        <taxon>Carnivora</taxon>
        <taxon>Caniformia</taxon>
        <taxon>Canidae</taxon>
        <taxon>Canis</taxon>
    </lineage>
</organism>
<proteinExistence type="inferred from homology"/>
<feature type="chain" id="PRO_0000118259" description="NADH-ubiquinone oxidoreductase chain 6">
    <location>
        <begin position="1"/>
        <end position="175"/>
    </location>
</feature>
<feature type="transmembrane region" description="Helical" evidence="3">
    <location>
        <begin position="1"/>
        <end position="21"/>
    </location>
</feature>
<feature type="transmembrane region" description="Helical" evidence="3">
    <location>
        <begin position="25"/>
        <end position="45"/>
    </location>
</feature>
<feature type="transmembrane region" description="Helical" evidence="3">
    <location>
        <begin position="47"/>
        <end position="67"/>
    </location>
</feature>
<feature type="transmembrane region" description="Helical" evidence="3">
    <location>
        <begin position="88"/>
        <end position="108"/>
    </location>
</feature>
<feature type="transmembrane region" description="Helical" evidence="3">
    <location>
        <begin position="149"/>
        <end position="169"/>
    </location>
</feature>
<name>NU6M_CANLF</name>
<gene>
    <name type="primary">MT-ND6</name>
    <name type="synonym">MTND6</name>
    <name type="synonym">NADH6</name>
    <name type="synonym">ND6</name>
</gene>
<comment type="function">
    <text evidence="1">Core subunit of the mitochondrial membrane respiratory chain NADH dehydrogenase (Complex I) which catalyzes electron transfer from NADH through the respiratory chain, using ubiquinone as an electron acceptor. Essential for the catalytic activity and assembly of complex I.</text>
</comment>
<comment type="catalytic activity">
    <reaction evidence="1">
        <text>a ubiquinone + NADH + 5 H(+)(in) = a ubiquinol + NAD(+) + 4 H(+)(out)</text>
        <dbReference type="Rhea" id="RHEA:29091"/>
        <dbReference type="Rhea" id="RHEA-COMP:9565"/>
        <dbReference type="Rhea" id="RHEA-COMP:9566"/>
        <dbReference type="ChEBI" id="CHEBI:15378"/>
        <dbReference type="ChEBI" id="CHEBI:16389"/>
        <dbReference type="ChEBI" id="CHEBI:17976"/>
        <dbReference type="ChEBI" id="CHEBI:57540"/>
        <dbReference type="ChEBI" id="CHEBI:57945"/>
        <dbReference type="EC" id="7.1.1.2"/>
    </reaction>
</comment>
<comment type="subunit">
    <text evidence="2">Core subunit of respiratory chain NADH dehydrogenase (Complex I) which is composed of 45 different subunits.</text>
</comment>
<comment type="subcellular location">
    <subcellularLocation>
        <location evidence="2">Mitochondrion inner membrane</location>
        <topology evidence="3">Multi-pass membrane protein</topology>
    </subcellularLocation>
</comment>
<comment type="similarity">
    <text evidence="4">Belongs to the complex I subunit 6 family.</text>
</comment>